<keyword id="KW-0002">3D-structure</keyword>
<keyword id="KW-0131">Cell cycle</keyword>
<keyword id="KW-0156">Chromatin regulator</keyword>
<keyword id="KW-0175">Coiled coil</keyword>
<keyword id="KW-0903">Direct protein sequencing</keyword>
<keyword id="KW-0227">DNA damage</keyword>
<keyword id="KW-0234">DNA repair</keyword>
<keyword id="KW-0469">Meiosis</keyword>
<keyword id="KW-0479">Metal-binding</keyword>
<keyword id="KW-0539">Nucleus</keyword>
<keyword id="KW-0597">Phosphoprotein</keyword>
<keyword id="KW-1185">Reference proteome</keyword>
<keyword id="KW-0862">Zinc</keyword>
<keyword id="KW-0863">Zinc-finger</keyword>
<evidence type="ECO:0000250" key="1">
    <source>
        <dbReference type="UniProtKB" id="Q9UK53"/>
    </source>
</evidence>
<evidence type="ECO:0000255" key="2"/>
<evidence type="ECO:0000255" key="3">
    <source>
        <dbReference type="PROSITE-ProRule" id="PRU00146"/>
    </source>
</evidence>
<evidence type="ECO:0000256" key="4">
    <source>
        <dbReference type="SAM" id="MobiDB-lite"/>
    </source>
</evidence>
<evidence type="ECO:0000269" key="5">
    <source>
    </source>
</evidence>
<evidence type="ECO:0000269" key="6">
    <source>
    </source>
</evidence>
<evidence type="ECO:0000269" key="7">
    <source>
    </source>
</evidence>
<evidence type="ECO:0000269" key="8">
    <source>
    </source>
</evidence>
<evidence type="ECO:0000269" key="9">
    <source>
    </source>
</evidence>
<evidence type="ECO:0000269" key="10">
    <source>
    </source>
</evidence>
<evidence type="ECO:0000269" key="11">
    <source>
    </source>
</evidence>
<evidence type="ECO:0000269" key="12">
    <source>
    </source>
</evidence>
<evidence type="ECO:0000269" key="13">
    <source>
    </source>
</evidence>
<evidence type="ECO:0000305" key="14"/>
<evidence type="ECO:0007744" key="15">
    <source>
    </source>
</evidence>
<evidence type="ECO:0007829" key="16">
    <source>
        <dbReference type="PDB" id="2MUM"/>
    </source>
</evidence>
<evidence type="ECO:0007829" key="17">
    <source>
        <dbReference type="PDB" id="5J9T"/>
    </source>
</evidence>
<comment type="function">
    <text evidence="5 6 7 8">Component of the NuA4 histone acetyltransferase complex which is involved in transcriptional activation of selected genes principally by acetylation of nucleosomal histone H4 and H2A. The NuA4 complex is also involved in DNA repair. Involved in cell cycle progression and meiosis.</text>
</comment>
<comment type="subunit">
    <text evidence="5 7 10 11 12 13">Interacts with H3K4me3 and to a lesser extent with H3K4me2. Component of the NuA4 histone acetyltransferase complex composed of at least ACT1, ARP4, YAF9, VID21, SWC4, EAF3, EAF5, EAF6, EAF7, EPL1, ESA1, TRA1 and YNG2.</text>
</comment>
<comment type="interaction">
    <interactant intactId="EBI-24622">
        <id>P38806</id>
    </interactant>
    <interactant intactId="EBI-22792">
        <id>P43572</id>
        <label>EPL1</label>
    </interactant>
    <organismsDiffer>false</organismsDiffer>
    <experiments>11</experiments>
</comment>
<comment type="subcellular location">
    <subcellularLocation>
        <location evidence="5 6 9">Nucleus</location>
    </subcellularLocation>
</comment>
<comment type="domain">
    <text evidence="13">The PHD-type zinc finger mediates the binding to H3K4me3.</text>
</comment>
<comment type="similarity">
    <text evidence="14">Belongs to the ING family.</text>
</comment>
<organism>
    <name type="scientific">Saccharomyces cerevisiae (strain ATCC 204508 / S288c)</name>
    <name type="common">Baker's yeast</name>
    <dbReference type="NCBI Taxonomy" id="559292"/>
    <lineage>
        <taxon>Eukaryota</taxon>
        <taxon>Fungi</taxon>
        <taxon>Dikarya</taxon>
        <taxon>Ascomycota</taxon>
        <taxon>Saccharomycotina</taxon>
        <taxon>Saccharomycetes</taxon>
        <taxon>Saccharomycetales</taxon>
        <taxon>Saccharomycetaceae</taxon>
        <taxon>Saccharomyces</taxon>
    </lineage>
</organism>
<reference key="1">
    <citation type="journal article" date="1994" name="Science">
        <title>Complete nucleotide sequence of Saccharomyces cerevisiae chromosome VIII.</title>
        <authorList>
            <person name="Johnston M."/>
            <person name="Andrews S."/>
            <person name="Brinkman R."/>
            <person name="Cooper J."/>
            <person name="Ding H."/>
            <person name="Dover J."/>
            <person name="Du Z."/>
            <person name="Favello A."/>
            <person name="Fulton L."/>
            <person name="Gattung S."/>
            <person name="Geisel C."/>
            <person name="Kirsten J."/>
            <person name="Kucaba T."/>
            <person name="Hillier L.W."/>
            <person name="Jier M."/>
            <person name="Johnston L."/>
            <person name="Langston Y."/>
            <person name="Latreille P."/>
            <person name="Louis E.J."/>
            <person name="Macri C."/>
            <person name="Mardis E."/>
            <person name="Menezes S."/>
            <person name="Mouser L."/>
            <person name="Nhan M."/>
            <person name="Rifkin L."/>
            <person name="Riles L."/>
            <person name="St Peter H."/>
            <person name="Trevaskis E."/>
            <person name="Vaughan K."/>
            <person name="Vignati D."/>
            <person name="Wilcox L."/>
            <person name="Wohldman P."/>
            <person name="Waterston R."/>
            <person name="Wilson R."/>
            <person name="Vaudin M."/>
        </authorList>
    </citation>
    <scope>NUCLEOTIDE SEQUENCE [LARGE SCALE GENOMIC DNA]</scope>
    <source>
        <strain>ATCC 204508 / S288c</strain>
    </source>
</reference>
<reference key="2">
    <citation type="journal article" date="2014" name="G3 (Bethesda)">
        <title>The reference genome sequence of Saccharomyces cerevisiae: Then and now.</title>
        <authorList>
            <person name="Engel S.R."/>
            <person name="Dietrich F.S."/>
            <person name="Fisk D.G."/>
            <person name="Binkley G."/>
            <person name="Balakrishnan R."/>
            <person name="Costanzo M.C."/>
            <person name="Dwight S.S."/>
            <person name="Hitz B.C."/>
            <person name="Karra K."/>
            <person name="Nash R.S."/>
            <person name="Weng S."/>
            <person name="Wong E.D."/>
            <person name="Lloyd P."/>
            <person name="Skrzypek M.S."/>
            <person name="Miyasato S.R."/>
            <person name="Simison M."/>
            <person name="Cherry J.M."/>
        </authorList>
    </citation>
    <scope>GENOME REANNOTATION</scope>
    <source>
        <strain>ATCC 204508 / S288c</strain>
    </source>
</reference>
<reference key="3">
    <citation type="journal article" date="2000" name="Mol. Cell. Biol.">
        <title>Three yeast proteins related to the human candidate tumor suppressor p33(ING1) are associated with histone acetyltransferase activities.</title>
        <authorList>
            <person name="Loewith R."/>
            <person name="Meijer M."/>
            <person name="Lees-Miller S.P."/>
            <person name="Riabowol K."/>
            <person name="Young D."/>
        </authorList>
    </citation>
    <scope>FUNCTION</scope>
    <scope>SUBCELLULAR LOCATION</scope>
    <scope>IDENTIFICATION IN THE NUA4 COMPLEX</scope>
</reference>
<reference key="4">
    <citation type="journal article" date="2001" name="J. Biol. Chem.">
        <title>Yng2p-dependent NuA4 histone H4 acetylation activity is required for mitotic and meiotic progression.</title>
        <authorList>
            <person name="Choy J.S."/>
            <person name="Tobe B.T.D."/>
            <person name="Huh J.H."/>
            <person name="Kron S.J."/>
        </authorList>
    </citation>
    <scope>FUNCTION</scope>
    <scope>SUBCELLULAR LOCATION</scope>
</reference>
<reference key="5">
    <citation type="journal article" date="2001" name="Mol. Cell. Biol.">
        <title>Role of an ING1 growth regulator in transcriptional activation and targeted histone acetylation by the NuA4 complex.</title>
        <authorList>
            <person name="Nourani A."/>
            <person name="Doyon Y."/>
            <person name="Utley R.T."/>
            <person name="Allard S."/>
            <person name="Lane W.S."/>
            <person name="Cote J."/>
        </authorList>
    </citation>
    <scope>PROTEIN SEQUENCE OF 1-34; 62-70; 107-161; 171-180 AND 184-193</scope>
    <scope>IDENTIFICATION IN THE NUA4 COMPLEX</scope>
    <scope>FUNCTION</scope>
</reference>
<reference key="6">
    <citation type="journal article" date="2002" name="Mol. Cell. Biol.">
        <title>NuA4 subunit Yng2 function in intra-S-phase DNA damage response.</title>
        <authorList>
            <person name="Choy J.S."/>
            <person name="Kron S.J."/>
        </authorList>
    </citation>
    <scope>FUNCTION</scope>
</reference>
<reference key="7">
    <citation type="journal article" date="2003" name="Mol. Cell">
        <title>Assigning function to yeast proteins by integration of technologies.</title>
        <authorList>
            <person name="Hazbun T.R."/>
            <person name="Malmstroem L."/>
            <person name="Anderson S."/>
            <person name="Graczyk B.J."/>
            <person name="Fox B."/>
            <person name="Riffle M."/>
            <person name="Sundin B.A."/>
            <person name="Aranda J.D."/>
            <person name="McDonald W.H."/>
            <person name="Chiu C.-H."/>
            <person name="Snydsman B.E."/>
            <person name="Bradley P."/>
            <person name="Muller E.G.D."/>
            <person name="Fields S."/>
            <person name="Baker D."/>
            <person name="Yates J.R. III"/>
            <person name="Davis T.N."/>
        </authorList>
    </citation>
    <scope>IDENTIFICATION BY MASS SPECTROMETRY</scope>
</reference>
<reference key="8">
    <citation type="journal article" date="2003" name="Nature">
        <title>Global analysis of protein localization in budding yeast.</title>
        <authorList>
            <person name="Huh W.-K."/>
            <person name="Falvo J.V."/>
            <person name="Gerke L.C."/>
            <person name="Carroll A.S."/>
            <person name="Howson R.W."/>
            <person name="Weissman J.S."/>
            <person name="O'Shea E.K."/>
        </authorList>
    </citation>
    <scope>SUBCELLULAR LOCATION [LARGE SCALE ANALYSIS]</scope>
</reference>
<reference key="9">
    <citation type="journal article" date="2004" name="Mol. Cell. Biol.">
        <title>The Yaf9 component of the SWR1 and NuA4 complexes is required for proper gene expression, histone H4 acetylation, and Htz1 replacement near telomeres.</title>
        <authorList>
            <person name="Zhang H."/>
            <person name="Richardson D.O."/>
            <person name="Roberts D.N."/>
            <person name="Utley R.T."/>
            <person name="Erdjument-Bromage H."/>
            <person name="Tempst P."/>
            <person name="Cote J."/>
            <person name="Cairns B.R."/>
        </authorList>
    </citation>
    <scope>IDENTIFICATION IN THE NUA4 COMPLEX</scope>
    <scope>IDENTIFICATION BY MASS SPECTROMETRY</scope>
</reference>
<reference key="10">
    <citation type="journal article" date="2004" name="PLoS Biol.">
        <title>A protein complex containing the conserved Swi2/Snf2-related ATPase Swr1p deposits histone variant H2A.Z into euchromatin.</title>
        <authorList>
            <person name="Kobor M.S."/>
            <person name="Venkatasubrahmanyam S."/>
            <person name="Meneghini M.D."/>
            <person name="Gin J.W."/>
            <person name="Jennings J.L."/>
            <person name="Link A.J."/>
            <person name="Madhani H.D."/>
            <person name="Rine J."/>
        </authorList>
    </citation>
    <scope>IDENTIFICATION IN THE NUA4 COMPLEX</scope>
    <scope>IDENTIFICATION BY MASS SPECTROMETRY</scope>
</reference>
<reference key="11">
    <citation type="journal article" date="2004" name="Proc. Natl. Acad. Sci. U.S.A.">
        <title>Regulation of chromosome stability by the histone H2A variant Htz1, the Swr1 chromatin remodeling complex, and the histone acetyltransferase NuA4.</title>
        <authorList>
            <person name="Krogan N.J."/>
            <person name="Baetz K."/>
            <person name="Keogh M.-C."/>
            <person name="Datta N."/>
            <person name="Sawa C."/>
            <person name="Kwok T.C.Y."/>
            <person name="Thompson N.J."/>
            <person name="Davey M.G."/>
            <person name="Pootoolal J."/>
            <person name="Hughes T.R."/>
            <person name="Emili A."/>
            <person name="Buratowski S."/>
            <person name="Hieter P."/>
            <person name="Greenblatt J.F."/>
        </authorList>
    </citation>
    <scope>IDENTIFICATION IN THE NUA4 COMPLEX</scope>
    <scope>IDENTIFICATION BY MASS SPECTROMETRY</scope>
</reference>
<reference key="12">
    <citation type="journal article" date="2006" name="Nature">
        <title>ING2 PHD domain links histone H3 lysine 4 methylation to active gene repression.</title>
        <authorList>
            <person name="Shi X."/>
            <person name="Hong T."/>
            <person name="Walter K.L."/>
            <person name="Ewalt M."/>
            <person name="Michishita E."/>
            <person name="Hung T."/>
            <person name="Carney D."/>
            <person name="Pena P."/>
            <person name="Lan F."/>
            <person name="Kaadige M.R."/>
            <person name="Lacoste N."/>
            <person name="Cayrou C."/>
            <person name="Davrazou F."/>
            <person name="Saha A."/>
            <person name="Cairns B.R."/>
            <person name="Ayer D.E."/>
            <person name="Kutateladze T.G."/>
            <person name="Shi Y."/>
            <person name="Cote J."/>
            <person name="Chua K.F."/>
            <person name="Gozani O."/>
        </authorList>
    </citation>
    <scope>DOMAIN PHD-TYPE ZINC-FINGER</scope>
    <scope>INTERACTION WITH HISTONES H3K4ME3 AND H3K4ME2</scope>
</reference>
<reference key="13">
    <citation type="journal article" date="2008" name="Mol. Cell. Proteomics">
        <title>A multidimensional chromatography technology for in-depth phosphoproteome analysis.</title>
        <authorList>
            <person name="Albuquerque C.P."/>
            <person name="Smolka M.B."/>
            <person name="Payne S.H."/>
            <person name="Bafna V."/>
            <person name="Eng J."/>
            <person name="Zhou H."/>
        </authorList>
    </citation>
    <scope>IDENTIFICATION BY MASS SPECTROMETRY [LARGE SCALE ANALYSIS]</scope>
</reference>
<reference key="14">
    <citation type="journal article" date="2009" name="Science">
        <title>Global analysis of Cdk1 substrate phosphorylation sites provides insights into evolution.</title>
        <authorList>
            <person name="Holt L.J."/>
            <person name="Tuch B.B."/>
            <person name="Villen J."/>
            <person name="Johnson A.D."/>
            <person name="Gygi S.P."/>
            <person name="Morgan D.O."/>
        </authorList>
    </citation>
    <scope>PHOSPHORYLATION [LARGE SCALE ANALYSIS] AT SER-183; THR-185 AND SER-188</scope>
    <scope>IDENTIFICATION BY MASS SPECTROMETRY [LARGE SCALE ANALYSIS]</scope>
</reference>
<protein>
    <recommendedName>
        <fullName>Chromatin modification-related protein YNG2</fullName>
    </recommendedName>
    <alternativeName>
        <fullName>ESA1-associated factor 4</fullName>
    </alternativeName>
    <alternativeName>
        <fullName>ING1 homolog 2</fullName>
    </alternativeName>
</protein>
<proteinExistence type="evidence at protein level"/>
<name>YNG2_YEAST</name>
<gene>
    <name type="primary">YNG2</name>
    <name type="synonym">EAF4</name>
    <name type="synonym">NBN1</name>
    <name type="ordered locus">YHR090C</name>
</gene>
<sequence>MDPSLVLEQTIQDVSNLPSEFRYLLEEIGSNDLKLIEEKKKYEQKESQIHKFIRQQGSIPKHPQEDGLDKEIKESLLKCQSLQREKCVLANTALFLIARHLNKLEKNIALLEEDGVLAPVEEDGDMDSAAEASRESSVVSNSSVKKRRAASSSGSVPPTLKKKKTSRTSKLQNEIDVSSREKSVTPVSPSIEKKIARTKEFKNSRNGKGQNGSPENEEEDKTLYCFCQRVSFGEMVACDGPNCKYEWFHYDCVNLKEPPKGTWYCPECKIEMEKNKLKRKRN</sequence>
<dbReference type="EMBL" id="U00060">
    <property type="protein sequence ID" value="AAB68930.1"/>
    <property type="molecule type" value="Genomic_DNA"/>
</dbReference>
<dbReference type="EMBL" id="BK006934">
    <property type="protein sequence ID" value="DAA06786.1"/>
    <property type="molecule type" value="Genomic_DNA"/>
</dbReference>
<dbReference type="PIR" id="S46722">
    <property type="entry name" value="S46722"/>
</dbReference>
<dbReference type="RefSeq" id="NP_011958.1">
    <property type="nucleotide sequence ID" value="NM_001179220.1"/>
</dbReference>
<dbReference type="PDB" id="2MUM">
    <property type="method" value="NMR"/>
    <property type="chains" value="A=222-271"/>
</dbReference>
<dbReference type="PDB" id="5J9Q">
    <property type="method" value="X-ray"/>
    <property type="resolution" value="3.25 A"/>
    <property type="chains" value="D/H/K=1-120"/>
</dbReference>
<dbReference type="PDB" id="5J9T">
    <property type="method" value="X-ray"/>
    <property type="resolution" value="2.70 A"/>
    <property type="chains" value="D/H/L=1-120"/>
</dbReference>
<dbReference type="PDB" id="5J9U">
    <property type="method" value="X-ray"/>
    <property type="resolution" value="2.95 A"/>
    <property type="chains" value="D/H/K=1-120"/>
</dbReference>
<dbReference type="PDB" id="5J9W">
    <property type="method" value="X-ray"/>
    <property type="resolution" value="2.80 A"/>
    <property type="chains" value="D/H/L=1-120"/>
</dbReference>
<dbReference type="PDB" id="7VVU">
    <property type="method" value="EM"/>
    <property type="resolution" value="3.40 A"/>
    <property type="chains" value="V=1-282"/>
</dbReference>
<dbReference type="PDB" id="7VVZ">
    <property type="method" value="EM"/>
    <property type="resolution" value="8.80 A"/>
    <property type="chains" value="V=1-282"/>
</dbReference>
<dbReference type="PDBsum" id="2MUM"/>
<dbReference type="PDBsum" id="5J9Q"/>
<dbReference type="PDBsum" id="5J9T"/>
<dbReference type="PDBsum" id="5J9U"/>
<dbReference type="PDBsum" id="5J9W"/>
<dbReference type="PDBsum" id="7VVU"/>
<dbReference type="PDBsum" id="7VVZ"/>
<dbReference type="BMRB" id="P38806"/>
<dbReference type="EMDB" id="EMD-32148"/>
<dbReference type="EMDB" id="EMD-32150"/>
<dbReference type="SMR" id="P38806"/>
<dbReference type="BioGRID" id="36525">
    <property type="interactions" value="600"/>
</dbReference>
<dbReference type="ComplexPortal" id="CPX-3155">
    <property type="entry name" value="NuA4 histone acetyltransferase complex"/>
</dbReference>
<dbReference type="ComplexPortal" id="CPX-3185">
    <property type="entry name" value="Piccolo NuA4 histone acetyltransferase complex"/>
</dbReference>
<dbReference type="DIP" id="DIP-2095N"/>
<dbReference type="FunCoup" id="P38806">
    <property type="interactions" value="378"/>
</dbReference>
<dbReference type="IntAct" id="P38806">
    <property type="interactions" value="19"/>
</dbReference>
<dbReference type="MINT" id="P38806"/>
<dbReference type="STRING" id="4932.YHR090C"/>
<dbReference type="iPTMnet" id="P38806"/>
<dbReference type="PaxDb" id="4932-YHR090C"/>
<dbReference type="PeptideAtlas" id="P38806"/>
<dbReference type="EnsemblFungi" id="YHR090C_mRNA">
    <property type="protein sequence ID" value="YHR090C"/>
    <property type="gene ID" value="YHR090C"/>
</dbReference>
<dbReference type="GeneID" id="856490"/>
<dbReference type="KEGG" id="sce:YHR090C"/>
<dbReference type="AGR" id="SGD:S000001132"/>
<dbReference type="SGD" id="S000001132">
    <property type="gene designation" value="YNG2"/>
</dbReference>
<dbReference type="VEuPathDB" id="FungiDB:YHR090C"/>
<dbReference type="eggNOG" id="KOG1973">
    <property type="taxonomic scope" value="Eukaryota"/>
</dbReference>
<dbReference type="GeneTree" id="ENSGT00940000156619"/>
<dbReference type="HOGENOM" id="CLU_031900_2_0_1"/>
<dbReference type="InParanoid" id="P38806"/>
<dbReference type="OMA" id="GPNCKYE"/>
<dbReference type="OrthoDB" id="5411773at2759"/>
<dbReference type="BioCyc" id="YEAST:G3O-31137-MONOMER"/>
<dbReference type="Reactome" id="R-SCE-3899300">
    <property type="pathway name" value="SUMOylation of transcription cofactors"/>
</dbReference>
<dbReference type="Reactome" id="R-SCE-6811555">
    <property type="pathway name" value="PI5P Regulates TP53 Acetylation"/>
</dbReference>
<dbReference type="BioGRID-ORCS" id="856490">
    <property type="hits" value="6 hits in 10 CRISPR screens"/>
</dbReference>
<dbReference type="EvolutionaryTrace" id="P38806"/>
<dbReference type="PRO" id="PR:P38806"/>
<dbReference type="Proteomes" id="UP000002311">
    <property type="component" value="Chromosome VIII"/>
</dbReference>
<dbReference type="RNAct" id="P38806">
    <property type="molecule type" value="protein"/>
</dbReference>
<dbReference type="GO" id="GO:0005829">
    <property type="term" value="C:cytosol"/>
    <property type="evidence" value="ECO:0000314"/>
    <property type="project" value="SGD"/>
</dbReference>
<dbReference type="GO" id="GO:0035267">
    <property type="term" value="C:NuA4 histone acetyltransferase complex"/>
    <property type="evidence" value="ECO:0000314"/>
    <property type="project" value="SGD"/>
</dbReference>
<dbReference type="GO" id="GO:0000786">
    <property type="term" value="C:nucleosome"/>
    <property type="evidence" value="ECO:0000314"/>
    <property type="project" value="ComplexPortal"/>
</dbReference>
<dbReference type="GO" id="GO:0005634">
    <property type="term" value="C:nucleus"/>
    <property type="evidence" value="ECO:0000314"/>
    <property type="project" value="SGD"/>
</dbReference>
<dbReference type="GO" id="GO:0032777">
    <property type="term" value="C:piccolo histone acetyltransferase complex"/>
    <property type="evidence" value="ECO:0000314"/>
    <property type="project" value="SGD"/>
</dbReference>
<dbReference type="GO" id="GO:0140002">
    <property type="term" value="F:histone H3K4me3 reader activity"/>
    <property type="evidence" value="ECO:0000314"/>
    <property type="project" value="UniProtKB"/>
</dbReference>
<dbReference type="GO" id="GO:0035064">
    <property type="term" value="F:methylated histone binding"/>
    <property type="evidence" value="ECO:0000314"/>
    <property type="project" value="SGD"/>
</dbReference>
<dbReference type="GO" id="GO:0008270">
    <property type="term" value="F:zinc ion binding"/>
    <property type="evidence" value="ECO:0007669"/>
    <property type="project" value="UniProtKB-KW"/>
</dbReference>
<dbReference type="GO" id="GO:0006338">
    <property type="term" value="P:chromatin remodeling"/>
    <property type="evidence" value="ECO:0007669"/>
    <property type="project" value="GOC"/>
</dbReference>
<dbReference type="GO" id="GO:0006281">
    <property type="term" value="P:DNA repair"/>
    <property type="evidence" value="ECO:0000314"/>
    <property type="project" value="SGD"/>
</dbReference>
<dbReference type="GO" id="GO:0006351">
    <property type="term" value="P:DNA-templated transcription"/>
    <property type="evidence" value="ECO:0000303"/>
    <property type="project" value="ComplexPortal"/>
</dbReference>
<dbReference type="GO" id="GO:0051321">
    <property type="term" value="P:meiotic cell cycle"/>
    <property type="evidence" value="ECO:0007669"/>
    <property type="project" value="UniProtKB-KW"/>
</dbReference>
<dbReference type="GO" id="GO:0006355">
    <property type="term" value="P:regulation of DNA-templated transcription"/>
    <property type="evidence" value="ECO:0000318"/>
    <property type="project" value="GO_Central"/>
</dbReference>
<dbReference type="CDD" id="cd16858">
    <property type="entry name" value="ING_ING3_Yng2p"/>
    <property type="match status" value="1"/>
</dbReference>
<dbReference type="CDD" id="cd15505">
    <property type="entry name" value="PHD_ING"/>
    <property type="match status" value="1"/>
</dbReference>
<dbReference type="FunFam" id="3.30.40.10:FF:000436">
    <property type="entry name" value="Chromatin modification-related protein"/>
    <property type="match status" value="1"/>
</dbReference>
<dbReference type="Gene3D" id="6.10.140.1740">
    <property type="match status" value="1"/>
</dbReference>
<dbReference type="Gene3D" id="3.30.40.10">
    <property type="entry name" value="Zinc/RING finger domain, C3HC4 (zinc finger)"/>
    <property type="match status" value="1"/>
</dbReference>
<dbReference type="InterPro" id="IPR028651">
    <property type="entry name" value="ING_fam"/>
</dbReference>
<dbReference type="InterPro" id="IPR024610">
    <property type="entry name" value="ING_N_histone-binding"/>
</dbReference>
<dbReference type="InterPro" id="IPR019786">
    <property type="entry name" value="Zinc_finger_PHD-type_CS"/>
</dbReference>
<dbReference type="InterPro" id="IPR011011">
    <property type="entry name" value="Znf_FYVE_PHD"/>
</dbReference>
<dbReference type="InterPro" id="IPR001965">
    <property type="entry name" value="Znf_PHD"/>
</dbReference>
<dbReference type="InterPro" id="IPR019787">
    <property type="entry name" value="Znf_PHD-finger"/>
</dbReference>
<dbReference type="InterPro" id="IPR013083">
    <property type="entry name" value="Znf_RING/FYVE/PHD"/>
</dbReference>
<dbReference type="PANTHER" id="PTHR10333:SF100">
    <property type="entry name" value="CHROMATIN MODIFICATION-RELATED PROTEIN YNG2"/>
    <property type="match status" value="1"/>
</dbReference>
<dbReference type="PANTHER" id="PTHR10333">
    <property type="entry name" value="INHIBITOR OF GROWTH PROTEIN"/>
    <property type="match status" value="1"/>
</dbReference>
<dbReference type="Pfam" id="PF12998">
    <property type="entry name" value="ING"/>
    <property type="match status" value="1"/>
</dbReference>
<dbReference type="Pfam" id="PF00628">
    <property type="entry name" value="PHD"/>
    <property type="match status" value="1"/>
</dbReference>
<dbReference type="SMART" id="SM01408">
    <property type="entry name" value="ING"/>
    <property type="match status" value="1"/>
</dbReference>
<dbReference type="SMART" id="SM00249">
    <property type="entry name" value="PHD"/>
    <property type="match status" value="1"/>
</dbReference>
<dbReference type="SUPFAM" id="SSF57903">
    <property type="entry name" value="FYVE/PHD zinc finger"/>
    <property type="match status" value="1"/>
</dbReference>
<dbReference type="PROSITE" id="PS01359">
    <property type="entry name" value="ZF_PHD_1"/>
    <property type="match status" value="1"/>
</dbReference>
<dbReference type="PROSITE" id="PS50016">
    <property type="entry name" value="ZF_PHD_2"/>
    <property type="match status" value="1"/>
</dbReference>
<accession>P38806</accession>
<accession>D3DL42</accession>
<feature type="chain" id="PRO_0000212679" description="Chromatin modification-related protein YNG2">
    <location>
        <begin position="1"/>
        <end position="282"/>
    </location>
</feature>
<feature type="zinc finger region" description="PHD-type" evidence="3">
    <location>
        <begin position="222"/>
        <end position="271"/>
    </location>
</feature>
<feature type="region of interest" description="Disordered" evidence="4">
    <location>
        <begin position="123"/>
        <end position="217"/>
    </location>
</feature>
<feature type="coiled-coil region" evidence="2">
    <location>
        <begin position="35"/>
        <end position="86"/>
    </location>
</feature>
<feature type="compositionally biased region" description="Low complexity" evidence="4">
    <location>
        <begin position="129"/>
        <end position="143"/>
    </location>
</feature>
<feature type="compositionally biased region" description="Basic and acidic residues" evidence="4">
    <location>
        <begin position="191"/>
        <end position="203"/>
    </location>
</feature>
<feature type="compositionally biased region" description="Polar residues" evidence="4">
    <location>
        <begin position="204"/>
        <end position="214"/>
    </location>
</feature>
<feature type="binding site" evidence="1">
    <location>
        <position position="225"/>
    </location>
    <ligand>
        <name>Zn(2+)</name>
        <dbReference type="ChEBI" id="CHEBI:29105"/>
        <label>1</label>
    </ligand>
</feature>
<feature type="binding site" evidence="1">
    <location>
        <position position="227"/>
    </location>
    <ligand>
        <name>Zn(2+)</name>
        <dbReference type="ChEBI" id="CHEBI:29105"/>
        <label>1</label>
    </ligand>
</feature>
<feature type="binding site" evidence="1">
    <location>
        <position position="238"/>
    </location>
    <ligand>
        <name>Zn(2+)</name>
        <dbReference type="ChEBI" id="CHEBI:29105"/>
        <label>2</label>
    </ligand>
</feature>
<feature type="binding site" evidence="1">
    <location>
        <position position="243"/>
    </location>
    <ligand>
        <name>Zn(2+)</name>
        <dbReference type="ChEBI" id="CHEBI:29105"/>
        <label>2</label>
    </ligand>
</feature>
<feature type="binding site" evidence="1">
    <location>
        <position position="249"/>
    </location>
    <ligand>
        <name>Zn(2+)</name>
        <dbReference type="ChEBI" id="CHEBI:29105"/>
        <label>1</label>
    </ligand>
</feature>
<feature type="binding site" evidence="1">
    <location>
        <position position="252"/>
    </location>
    <ligand>
        <name>Zn(2+)</name>
        <dbReference type="ChEBI" id="CHEBI:29105"/>
        <label>1</label>
    </ligand>
</feature>
<feature type="binding site" evidence="1">
    <location>
        <position position="265"/>
    </location>
    <ligand>
        <name>Zn(2+)</name>
        <dbReference type="ChEBI" id="CHEBI:29105"/>
        <label>2</label>
    </ligand>
</feature>
<feature type="binding site" evidence="1">
    <location>
        <position position="268"/>
    </location>
    <ligand>
        <name>Zn(2+)</name>
        <dbReference type="ChEBI" id="CHEBI:29105"/>
        <label>2</label>
    </ligand>
</feature>
<feature type="site" description="Histone H3K4me3 binding" evidence="1">
    <location>
        <position position="224"/>
    </location>
</feature>
<feature type="site" description="Histone H3K4me3 binding" evidence="1">
    <location>
        <position position="235"/>
    </location>
</feature>
<feature type="site" description="Histone H3K4me3 binding" evidence="1">
    <location>
        <position position="239"/>
    </location>
</feature>
<feature type="site" description="Histone H3K4me3 binding" evidence="1">
    <location>
        <position position="247"/>
    </location>
</feature>
<feature type="modified residue" description="Phosphoserine" evidence="15">
    <location>
        <position position="183"/>
    </location>
</feature>
<feature type="modified residue" description="Phosphothreonine" evidence="15">
    <location>
        <position position="185"/>
    </location>
</feature>
<feature type="modified residue" description="Phosphoserine" evidence="15">
    <location>
        <position position="188"/>
    </location>
</feature>
<feature type="helix" evidence="17">
    <location>
        <begin position="3"/>
        <end position="13"/>
    </location>
</feature>
<feature type="turn" evidence="17">
    <location>
        <begin position="14"/>
        <end position="16"/>
    </location>
</feature>
<feature type="helix" evidence="17">
    <location>
        <begin position="17"/>
        <end position="56"/>
    </location>
</feature>
<feature type="strand" evidence="17">
    <location>
        <begin position="58"/>
        <end position="60"/>
    </location>
</feature>
<feature type="helix" evidence="17">
    <location>
        <begin position="65"/>
        <end position="113"/>
    </location>
</feature>
<feature type="strand" evidence="16">
    <location>
        <begin position="225"/>
        <end position="227"/>
    </location>
</feature>
<feature type="turn" evidence="16">
    <location>
        <begin position="250"/>
        <end position="254"/>
    </location>
</feature>
<feature type="helix" evidence="16">
    <location>
        <begin position="266"/>
        <end position="270"/>
    </location>
</feature>